<dbReference type="EMBL" id="FK754940">
    <property type="status" value="NOT_ANNOTATED_CDS"/>
    <property type="molecule type" value="mRNA"/>
</dbReference>
<dbReference type="EMBL" id="FK746962">
    <property type="status" value="NOT_ANNOTATED_CDS"/>
    <property type="molecule type" value="mRNA"/>
</dbReference>
<dbReference type="EMBL" id="FK725877">
    <property type="status" value="NOT_ANNOTATED_CDS"/>
    <property type="molecule type" value="mRNA"/>
</dbReference>
<dbReference type="EMBL" id="FK744302">
    <property type="status" value="NOT_ANNOTATED_CDS"/>
    <property type="molecule type" value="mRNA"/>
</dbReference>
<dbReference type="EMBL" id="FK719896">
    <property type="status" value="NOT_ANNOTATED_CDS"/>
    <property type="molecule type" value="mRNA"/>
</dbReference>
<dbReference type="SMR" id="P0DMY0"/>
<dbReference type="GO" id="GO:0005576">
    <property type="term" value="C:extracellular region"/>
    <property type="evidence" value="ECO:0007669"/>
    <property type="project" value="UniProtKB-SubCell"/>
</dbReference>
<dbReference type="GO" id="GO:0042151">
    <property type="term" value="C:nematocyst"/>
    <property type="evidence" value="ECO:0007669"/>
    <property type="project" value="UniProtKB-SubCell"/>
</dbReference>
<dbReference type="GO" id="GO:0008200">
    <property type="term" value="F:ion channel inhibitor activity"/>
    <property type="evidence" value="ECO:0007669"/>
    <property type="project" value="InterPro"/>
</dbReference>
<dbReference type="GO" id="GO:0015459">
    <property type="term" value="F:potassium channel regulator activity"/>
    <property type="evidence" value="ECO:0007669"/>
    <property type="project" value="UniProtKB-KW"/>
</dbReference>
<dbReference type="GO" id="GO:0090729">
    <property type="term" value="F:toxin activity"/>
    <property type="evidence" value="ECO:0007669"/>
    <property type="project" value="UniProtKB-KW"/>
</dbReference>
<dbReference type="GO" id="GO:0008217">
    <property type="term" value="P:regulation of blood pressure"/>
    <property type="evidence" value="ECO:0007669"/>
    <property type="project" value="UniProtKB-KW"/>
</dbReference>
<dbReference type="Gene3D" id="2.20.20.10">
    <property type="entry name" value="Anthopleurin-A"/>
    <property type="match status" value="1"/>
</dbReference>
<dbReference type="InterPro" id="IPR012414">
    <property type="entry name" value="BDS_K_chnl_tox"/>
</dbReference>
<dbReference type="InterPro" id="IPR023355">
    <property type="entry name" value="Myo_ane_neurotoxin_sf"/>
</dbReference>
<dbReference type="Pfam" id="PF07936">
    <property type="entry name" value="Defensin_4"/>
    <property type="match status" value="1"/>
</dbReference>
<dbReference type="SUPFAM" id="SSF57392">
    <property type="entry name" value="Defensin-like"/>
    <property type="match status" value="1"/>
</dbReference>
<protein>
    <recommendedName>
        <fullName evidence="5">Kappa-actitoxin-Avd4f</fullName>
        <shortName evidence="5">Kappa-AITX-Avd4f</shortName>
    </recommendedName>
    <alternativeName>
        <fullName>Antihypertensive protein BDS-6</fullName>
    </alternativeName>
    <alternativeName>
        <fullName evidence="4">Blood depressing substance 6</fullName>
        <shortName evidence="4">BDS-6</shortName>
    </alternativeName>
</protein>
<organism>
    <name type="scientific">Anemonia viridis</name>
    <name type="common">Snakelocks anemone</name>
    <dbReference type="NCBI Taxonomy" id="51769"/>
    <lineage>
        <taxon>Eukaryota</taxon>
        <taxon>Metazoa</taxon>
        <taxon>Cnidaria</taxon>
        <taxon>Anthozoa</taxon>
        <taxon>Hexacorallia</taxon>
        <taxon>Actiniaria</taxon>
        <taxon>Actiniidae</taxon>
        <taxon>Anemonia</taxon>
    </lineage>
</organism>
<evidence type="ECO:0000250" key="1">
    <source>
        <dbReference type="UniProtKB" id="P11494"/>
    </source>
</evidence>
<evidence type="ECO:0000255" key="2"/>
<evidence type="ECO:0000269" key="3">
    <source>
    </source>
</evidence>
<evidence type="ECO:0000303" key="4">
    <source>
    </source>
</evidence>
<evidence type="ECO:0000303" key="5">
    <source>
    </source>
</evidence>
<evidence type="ECO:0000305" key="6"/>
<name>BDS6_ANEVI</name>
<sequence>MNKALFLCLVVLCAAVVFAAEDLQKAKHAPFKRGAAGAAICICPDKVGRGDLWLFRGDCPGGYGYTSDCYVWPNICCYPH</sequence>
<keyword id="KW-0165">Cleavage on pair of basic residues</keyword>
<keyword id="KW-1015">Disulfide bond</keyword>
<keyword id="KW-0382">Hypotensive agent</keyword>
<keyword id="KW-0872">Ion channel impairing toxin</keyword>
<keyword id="KW-0166">Nematocyst</keyword>
<keyword id="KW-0528">Neurotoxin</keyword>
<keyword id="KW-0632">Potassium channel impairing toxin</keyword>
<keyword id="KW-0964">Secreted</keyword>
<keyword id="KW-0732">Signal</keyword>
<keyword id="KW-0800">Toxin</keyword>
<keyword id="KW-1220">Voltage-gated potassium channel impairing toxin</keyword>
<feature type="signal peptide" evidence="2">
    <location>
        <begin position="1"/>
        <end position="19"/>
    </location>
</feature>
<feature type="propeptide" id="PRO_0000433656" evidence="1">
    <location>
        <begin position="20"/>
        <end position="31"/>
    </location>
</feature>
<feature type="chain" id="PRO_0000433657" description="Kappa-actitoxin-Avd4f">
    <location>
        <begin position="34"/>
        <end position="80"/>
    </location>
</feature>
<feature type="disulfide bond" evidence="1">
    <location>
        <begin position="41"/>
        <end position="76"/>
    </location>
</feature>
<feature type="disulfide bond" evidence="1">
    <location>
        <begin position="43"/>
        <end position="69"/>
    </location>
</feature>
<feature type="disulfide bond" evidence="1">
    <location>
        <begin position="59"/>
        <end position="77"/>
    </location>
</feature>
<reference key="1">
    <citation type="journal article" date="2009" name="BMC Genomics">
        <title>Comprehensive EST analysis of the symbiotic sea anemone, Anemonia viridis.</title>
        <authorList>
            <person name="Sabourault C."/>
            <person name="Ganot P."/>
            <person name="Deleury E."/>
            <person name="Allemand D."/>
            <person name="Furla P."/>
        </authorList>
    </citation>
    <scope>NUCLEOTIDE SEQUENCE [MRNA]</scope>
</reference>
<reference key="2">
    <citation type="journal article" date="2011" name="BMC Genomics">
        <title>The mining of toxin-like polypeptides from EST database by single residue distribution analysis.</title>
        <authorList>
            <person name="Kozlov S."/>
            <person name="Grishin E."/>
        </authorList>
    </citation>
    <scope>NOMENCLATURE</scope>
</reference>
<reference key="3">
    <citation type="journal article" date="2012" name="Toxicon">
        <title>Development of a rational nomenclature for naming peptide and protein toxins from sea anemones.</title>
        <authorList>
            <person name="Oliveira J.S."/>
            <person name="Fuentes-Silva D."/>
            <person name="King G.F."/>
        </authorList>
    </citation>
    <scope>NOMENCLATURE</scope>
</reference>
<reference key="4">
    <citation type="journal article" date="2013" name="Mar. Drugs">
        <title>Evidence of accelerated evolution and ectodermal-specific expression of presumptive BDS toxin cDNAs from Anemonia viridis.</title>
        <authorList>
            <person name="Nicosia A."/>
            <person name="Maggio T."/>
            <person name="Mazzola S."/>
            <person name="Cuttitta A."/>
        </authorList>
    </citation>
    <scope>3D-STRUCTURE MODELING</scope>
    <scope>TISSUE SPECIFICITY</scope>
</reference>
<accession>P0DMY0</accession>
<comment type="function">
    <text evidence="1">Blocks Kv3 voltage-gated potassium channels. Reduces blood pressure.</text>
</comment>
<comment type="subcellular location">
    <subcellularLocation>
        <location evidence="6">Secreted</location>
    </subcellularLocation>
    <subcellularLocation>
        <location evidence="6">Nematocyst</location>
    </subcellularLocation>
</comment>
<comment type="tissue specificity">
    <text evidence="3">Moderately expressed in the ectodermal tissue from the distal and proximal tentacles, body wall, and oral disk.</text>
</comment>
<comment type="similarity">
    <text evidence="6">Belongs to the sea anemone type 3 (BDS) potassium channel toxin family.</text>
</comment>
<comment type="caution">
    <text evidence="6">Opinions are divided on whether Anemonia viridis (Forsskal, 1775) and Anemonia sulcata (Pennant, 1777) are separate species.</text>
</comment>
<proteinExistence type="evidence at transcript level"/>